<comment type="function">
    <text evidence="1">Component of the acetyl coenzyme A carboxylase (ACC) complex. Biotin carboxylase (BC) catalyzes the carboxylation of biotin on its carrier protein (BCCP) and then the CO(2) group is transferred by the transcarboxylase to acetyl-CoA to form malonyl-CoA.</text>
</comment>
<comment type="catalytic activity">
    <reaction evidence="1">
        <text>N(6)-carboxybiotinyl-L-lysyl-[protein] + acetyl-CoA = N(6)-biotinyl-L-lysyl-[protein] + malonyl-CoA</text>
        <dbReference type="Rhea" id="RHEA:54728"/>
        <dbReference type="Rhea" id="RHEA-COMP:10505"/>
        <dbReference type="Rhea" id="RHEA-COMP:10506"/>
        <dbReference type="ChEBI" id="CHEBI:57288"/>
        <dbReference type="ChEBI" id="CHEBI:57384"/>
        <dbReference type="ChEBI" id="CHEBI:83144"/>
        <dbReference type="ChEBI" id="CHEBI:83145"/>
        <dbReference type="EC" id="2.1.3.15"/>
    </reaction>
</comment>
<comment type="pathway">
    <text evidence="1">Lipid metabolism; malonyl-CoA biosynthesis; malonyl-CoA from acetyl-CoA: step 1/1.</text>
</comment>
<comment type="subunit">
    <text evidence="1">Acetyl-CoA carboxylase is a heterohexamer composed of biotin carboxyl carrier protein (AccB), biotin carboxylase (AccC) and two subunits each of ACCase subunit alpha (AccA) and ACCase subunit beta (AccD).</text>
</comment>
<comment type="subcellular location">
    <subcellularLocation>
        <location evidence="1">Cytoplasm</location>
    </subcellularLocation>
</comment>
<comment type="similarity">
    <text evidence="1">Belongs to the AccD/PCCB family.</text>
</comment>
<evidence type="ECO:0000255" key="1">
    <source>
        <dbReference type="HAMAP-Rule" id="MF_01395"/>
    </source>
</evidence>
<evidence type="ECO:0000255" key="2">
    <source>
        <dbReference type="PROSITE-ProRule" id="PRU01136"/>
    </source>
</evidence>
<protein>
    <recommendedName>
        <fullName evidence="1">Acetyl-coenzyme A carboxylase carboxyl transferase subunit beta</fullName>
        <shortName evidence="1">ACCase subunit beta</shortName>
        <shortName evidence="1">Acetyl-CoA carboxylase carboxyltransferase subunit beta</shortName>
        <ecNumber evidence="1">2.1.3.15</ecNumber>
    </recommendedName>
</protein>
<feature type="chain" id="PRO_0000389780" description="Acetyl-coenzyme A carboxylase carboxyl transferase subunit beta">
    <location>
        <begin position="1"/>
        <end position="284"/>
    </location>
</feature>
<feature type="domain" description="CoA carboxyltransferase N-terminal" evidence="2">
    <location>
        <begin position="25"/>
        <end position="284"/>
    </location>
</feature>
<proteinExistence type="inferred from homology"/>
<gene>
    <name evidence="1" type="primary">accD</name>
    <name type="ordered locus">CLIBASIA_03555</name>
</gene>
<sequence>MNWITNFVRPRINSVFGRRAIPENLWVKCPETGAMVYHKDLKENQWVISSSDFHMKIPAKERLKFLFDNAKYCLLDQPQVCQDPLKFRDNKKYIDRLKENRSKTGLIDSIVSAVGNVRDFKLVAVVHEFSFIGGSIGIAAGEAIVKSCERAIAEKCPLVMFTASGGARMQEGILSLMQLPRTTIAINMLKDAGLPYIVVLTNPTTGGVTASYAMLGDIHLAEPGAEIGFAGRRVIEQTVREKLPDGFQRSEYLVEHGMIDRIVHRHDIPEVVSSLCKILTKSVQ</sequence>
<accession>C6XFZ0</accession>
<dbReference type="EC" id="2.1.3.15" evidence="1"/>
<dbReference type="EMBL" id="CP001677">
    <property type="protein sequence ID" value="ACT57293.1"/>
    <property type="molecule type" value="Genomic_DNA"/>
</dbReference>
<dbReference type="RefSeq" id="WP_012778722.1">
    <property type="nucleotide sequence ID" value="NC_012985.3"/>
</dbReference>
<dbReference type="SMR" id="C6XFZ0"/>
<dbReference type="STRING" id="537021.CLIBASIA_03555"/>
<dbReference type="GeneID" id="93076750"/>
<dbReference type="KEGG" id="las:CLIBASIA_03555"/>
<dbReference type="eggNOG" id="COG0777">
    <property type="taxonomic scope" value="Bacteria"/>
</dbReference>
<dbReference type="HOGENOM" id="CLU_015486_1_0_5"/>
<dbReference type="OrthoDB" id="9772975at2"/>
<dbReference type="UniPathway" id="UPA00655">
    <property type="reaction ID" value="UER00711"/>
</dbReference>
<dbReference type="Proteomes" id="UP000002744">
    <property type="component" value="Chromosome"/>
</dbReference>
<dbReference type="GO" id="GO:0009329">
    <property type="term" value="C:acetate CoA-transferase complex"/>
    <property type="evidence" value="ECO:0007669"/>
    <property type="project" value="TreeGrafter"/>
</dbReference>
<dbReference type="GO" id="GO:0003989">
    <property type="term" value="F:acetyl-CoA carboxylase activity"/>
    <property type="evidence" value="ECO:0007669"/>
    <property type="project" value="InterPro"/>
</dbReference>
<dbReference type="GO" id="GO:0005524">
    <property type="term" value="F:ATP binding"/>
    <property type="evidence" value="ECO:0007669"/>
    <property type="project" value="UniProtKB-KW"/>
</dbReference>
<dbReference type="GO" id="GO:0016743">
    <property type="term" value="F:carboxyl- or carbamoyltransferase activity"/>
    <property type="evidence" value="ECO:0007669"/>
    <property type="project" value="UniProtKB-UniRule"/>
</dbReference>
<dbReference type="GO" id="GO:0006633">
    <property type="term" value="P:fatty acid biosynthetic process"/>
    <property type="evidence" value="ECO:0007669"/>
    <property type="project" value="UniProtKB-KW"/>
</dbReference>
<dbReference type="GO" id="GO:2001295">
    <property type="term" value="P:malonyl-CoA biosynthetic process"/>
    <property type="evidence" value="ECO:0007669"/>
    <property type="project" value="UniProtKB-UniRule"/>
</dbReference>
<dbReference type="Gene3D" id="3.90.226.10">
    <property type="entry name" value="2-enoyl-CoA Hydratase, Chain A, domain 1"/>
    <property type="match status" value="1"/>
</dbReference>
<dbReference type="HAMAP" id="MF_01395">
    <property type="entry name" value="AcetylCoA_CT_beta"/>
    <property type="match status" value="1"/>
</dbReference>
<dbReference type="InterPro" id="IPR034733">
    <property type="entry name" value="AcCoA_carboxyl_beta"/>
</dbReference>
<dbReference type="InterPro" id="IPR000438">
    <property type="entry name" value="Acetyl_CoA_COase_Trfase_b_su"/>
</dbReference>
<dbReference type="InterPro" id="IPR029045">
    <property type="entry name" value="ClpP/crotonase-like_dom_sf"/>
</dbReference>
<dbReference type="InterPro" id="IPR011762">
    <property type="entry name" value="COA_CT_N"/>
</dbReference>
<dbReference type="NCBIfam" id="TIGR00515">
    <property type="entry name" value="accD"/>
    <property type="match status" value="1"/>
</dbReference>
<dbReference type="PANTHER" id="PTHR42995">
    <property type="entry name" value="ACETYL-COENZYME A CARBOXYLASE CARBOXYL TRANSFERASE SUBUNIT BETA, CHLOROPLASTIC"/>
    <property type="match status" value="1"/>
</dbReference>
<dbReference type="PANTHER" id="PTHR42995:SF5">
    <property type="entry name" value="ACETYL-COENZYME A CARBOXYLASE CARBOXYL TRANSFERASE SUBUNIT BETA, CHLOROPLASTIC"/>
    <property type="match status" value="1"/>
</dbReference>
<dbReference type="Pfam" id="PF01039">
    <property type="entry name" value="Carboxyl_trans"/>
    <property type="match status" value="1"/>
</dbReference>
<dbReference type="PRINTS" id="PR01070">
    <property type="entry name" value="ACCCTRFRASEB"/>
</dbReference>
<dbReference type="SUPFAM" id="SSF52096">
    <property type="entry name" value="ClpP/crotonase"/>
    <property type="match status" value="1"/>
</dbReference>
<dbReference type="PROSITE" id="PS50980">
    <property type="entry name" value="COA_CT_NTER"/>
    <property type="match status" value="1"/>
</dbReference>
<organism>
    <name type="scientific">Liberibacter asiaticus (strain psy62)</name>
    <dbReference type="NCBI Taxonomy" id="537021"/>
    <lineage>
        <taxon>Bacteria</taxon>
        <taxon>Pseudomonadati</taxon>
        <taxon>Pseudomonadota</taxon>
        <taxon>Alphaproteobacteria</taxon>
        <taxon>Hyphomicrobiales</taxon>
        <taxon>Rhizobiaceae</taxon>
        <taxon>Liberibacter</taxon>
    </lineage>
</organism>
<reference key="1">
    <citation type="journal article" date="2009" name="Mol. Plant Microbe Interact.">
        <title>Complete genome sequence of citrus huanglongbing bacterium, 'Candidatus Liberibacter asiaticus' obtained through metagenomics.</title>
        <authorList>
            <person name="Duan Y."/>
            <person name="Zhou L."/>
            <person name="Hall D.G."/>
            <person name="Li W."/>
            <person name="Doddapaneni H."/>
            <person name="Lin H."/>
            <person name="Liu L."/>
            <person name="Vahling C.M."/>
            <person name="Gabriel D.W."/>
            <person name="Williams K.P."/>
            <person name="Dickerman A."/>
            <person name="Sun Y."/>
            <person name="Gottwald T."/>
        </authorList>
    </citation>
    <scope>NUCLEOTIDE SEQUENCE [LARGE SCALE GENOMIC DNA]</scope>
    <source>
        <strain>psy62</strain>
    </source>
</reference>
<keyword id="KW-0067">ATP-binding</keyword>
<keyword id="KW-0963">Cytoplasm</keyword>
<keyword id="KW-0275">Fatty acid biosynthesis</keyword>
<keyword id="KW-0276">Fatty acid metabolism</keyword>
<keyword id="KW-0444">Lipid biosynthesis</keyword>
<keyword id="KW-0443">Lipid metabolism</keyword>
<keyword id="KW-0547">Nucleotide-binding</keyword>
<keyword id="KW-0808">Transferase</keyword>
<name>ACCD_LIBAP</name>